<evidence type="ECO:0000255" key="1">
    <source>
        <dbReference type="HAMAP-Rule" id="MF_01026"/>
    </source>
</evidence>
<reference key="1">
    <citation type="submission" date="2006-03" db="EMBL/GenBank/DDBJ databases">
        <title>Complete sequence of Rhodopseudomonas palustris BisB5.</title>
        <authorList>
            <consortium name="US DOE Joint Genome Institute"/>
            <person name="Copeland A."/>
            <person name="Lucas S."/>
            <person name="Lapidus A."/>
            <person name="Barry K."/>
            <person name="Detter J.C."/>
            <person name="Glavina del Rio T."/>
            <person name="Hammon N."/>
            <person name="Israni S."/>
            <person name="Dalin E."/>
            <person name="Tice H."/>
            <person name="Pitluck S."/>
            <person name="Chain P."/>
            <person name="Malfatti S."/>
            <person name="Shin M."/>
            <person name="Vergez L."/>
            <person name="Schmutz J."/>
            <person name="Larimer F."/>
            <person name="Land M."/>
            <person name="Hauser L."/>
            <person name="Pelletier D.A."/>
            <person name="Kyrpides N."/>
            <person name="Lykidis A."/>
            <person name="Oda Y."/>
            <person name="Harwood C.S."/>
            <person name="Richardson P."/>
        </authorList>
    </citation>
    <scope>NUCLEOTIDE SEQUENCE [LARGE SCALE GENOMIC DNA]</scope>
    <source>
        <strain>BisB5</strain>
    </source>
</reference>
<name>LEUC_RHOPS</name>
<keyword id="KW-0004">4Fe-4S</keyword>
<keyword id="KW-0028">Amino-acid biosynthesis</keyword>
<keyword id="KW-0100">Branched-chain amino acid biosynthesis</keyword>
<keyword id="KW-0408">Iron</keyword>
<keyword id="KW-0411">Iron-sulfur</keyword>
<keyword id="KW-0432">Leucine biosynthesis</keyword>
<keyword id="KW-0456">Lyase</keyword>
<keyword id="KW-0479">Metal-binding</keyword>
<dbReference type="EC" id="4.2.1.33" evidence="1"/>
<dbReference type="EMBL" id="CP000283">
    <property type="protein sequence ID" value="ABE37742.1"/>
    <property type="molecule type" value="Genomic_DNA"/>
</dbReference>
<dbReference type="SMR" id="Q13DU7"/>
<dbReference type="STRING" id="316057.RPD_0504"/>
<dbReference type="KEGG" id="rpd:RPD_0504"/>
<dbReference type="eggNOG" id="COG0065">
    <property type="taxonomic scope" value="Bacteria"/>
</dbReference>
<dbReference type="HOGENOM" id="CLU_006714_3_4_5"/>
<dbReference type="BioCyc" id="RPAL316057:RPD_RS02590-MONOMER"/>
<dbReference type="UniPathway" id="UPA00048">
    <property type="reaction ID" value="UER00071"/>
</dbReference>
<dbReference type="Proteomes" id="UP000001818">
    <property type="component" value="Chromosome"/>
</dbReference>
<dbReference type="GO" id="GO:0003861">
    <property type="term" value="F:3-isopropylmalate dehydratase activity"/>
    <property type="evidence" value="ECO:0007669"/>
    <property type="project" value="UniProtKB-UniRule"/>
</dbReference>
<dbReference type="GO" id="GO:0051539">
    <property type="term" value="F:4 iron, 4 sulfur cluster binding"/>
    <property type="evidence" value="ECO:0007669"/>
    <property type="project" value="UniProtKB-KW"/>
</dbReference>
<dbReference type="GO" id="GO:0046872">
    <property type="term" value="F:metal ion binding"/>
    <property type="evidence" value="ECO:0007669"/>
    <property type="project" value="UniProtKB-KW"/>
</dbReference>
<dbReference type="GO" id="GO:0009098">
    <property type="term" value="P:L-leucine biosynthetic process"/>
    <property type="evidence" value="ECO:0007669"/>
    <property type="project" value="UniProtKB-UniRule"/>
</dbReference>
<dbReference type="CDD" id="cd01583">
    <property type="entry name" value="IPMI"/>
    <property type="match status" value="1"/>
</dbReference>
<dbReference type="FunFam" id="3.30.499.10:FF:000007">
    <property type="entry name" value="3-isopropylmalate dehydratase large subunit"/>
    <property type="match status" value="1"/>
</dbReference>
<dbReference type="Gene3D" id="3.30.499.10">
    <property type="entry name" value="Aconitase, domain 3"/>
    <property type="match status" value="2"/>
</dbReference>
<dbReference type="HAMAP" id="MF_01026">
    <property type="entry name" value="LeuC_type1"/>
    <property type="match status" value="1"/>
</dbReference>
<dbReference type="InterPro" id="IPR004430">
    <property type="entry name" value="3-IsopropMal_deHydase_lsu"/>
</dbReference>
<dbReference type="InterPro" id="IPR015931">
    <property type="entry name" value="Acnase/IPM_dHydase_lsu_aba_1/3"/>
</dbReference>
<dbReference type="InterPro" id="IPR001030">
    <property type="entry name" value="Acoase/IPM_deHydtase_lsu_aba"/>
</dbReference>
<dbReference type="InterPro" id="IPR018136">
    <property type="entry name" value="Aconitase_4Fe-4S_BS"/>
</dbReference>
<dbReference type="InterPro" id="IPR036008">
    <property type="entry name" value="Aconitase_4Fe-4S_dom"/>
</dbReference>
<dbReference type="InterPro" id="IPR050067">
    <property type="entry name" value="IPM_dehydratase_rel_enz"/>
</dbReference>
<dbReference type="InterPro" id="IPR033941">
    <property type="entry name" value="IPMI_cat"/>
</dbReference>
<dbReference type="NCBIfam" id="TIGR00170">
    <property type="entry name" value="leuC"/>
    <property type="match status" value="1"/>
</dbReference>
<dbReference type="NCBIfam" id="NF004016">
    <property type="entry name" value="PRK05478.1"/>
    <property type="match status" value="1"/>
</dbReference>
<dbReference type="NCBIfam" id="NF009116">
    <property type="entry name" value="PRK12466.1"/>
    <property type="match status" value="1"/>
</dbReference>
<dbReference type="PANTHER" id="PTHR43822:SF9">
    <property type="entry name" value="3-ISOPROPYLMALATE DEHYDRATASE"/>
    <property type="match status" value="1"/>
</dbReference>
<dbReference type="PANTHER" id="PTHR43822">
    <property type="entry name" value="HOMOACONITASE, MITOCHONDRIAL-RELATED"/>
    <property type="match status" value="1"/>
</dbReference>
<dbReference type="Pfam" id="PF00330">
    <property type="entry name" value="Aconitase"/>
    <property type="match status" value="1"/>
</dbReference>
<dbReference type="PRINTS" id="PR00415">
    <property type="entry name" value="ACONITASE"/>
</dbReference>
<dbReference type="SUPFAM" id="SSF53732">
    <property type="entry name" value="Aconitase iron-sulfur domain"/>
    <property type="match status" value="1"/>
</dbReference>
<dbReference type="PROSITE" id="PS00450">
    <property type="entry name" value="ACONITASE_1"/>
    <property type="match status" value="1"/>
</dbReference>
<dbReference type="PROSITE" id="PS01244">
    <property type="entry name" value="ACONITASE_2"/>
    <property type="match status" value="1"/>
</dbReference>
<gene>
    <name evidence="1" type="primary">leuC</name>
    <name type="ordered locus">RPD_0504</name>
</gene>
<comment type="function">
    <text evidence="1">Catalyzes the isomerization between 2-isopropylmalate and 3-isopropylmalate, via the formation of 2-isopropylmaleate.</text>
</comment>
<comment type="catalytic activity">
    <reaction evidence="1">
        <text>(2R,3S)-3-isopropylmalate = (2S)-2-isopropylmalate</text>
        <dbReference type="Rhea" id="RHEA:32287"/>
        <dbReference type="ChEBI" id="CHEBI:1178"/>
        <dbReference type="ChEBI" id="CHEBI:35121"/>
        <dbReference type="EC" id="4.2.1.33"/>
    </reaction>
</comment>
<comment type="cofactor">
    <cofactor evidence="1">
        <name>[4Fe-4S] cluster</name>
        <dbReference type="ChEBI" id="CHEBI:49883"/>
    </cofactor>
    <text evidence="1">Binds 1 [4Fe-4S] cluster per subunit.</text>
</comment>
<comment type="pathway">
    <text evidence="1">Amino-acid biosynthesis; L-leucine biosynthesis; L-leucine from 3-methyl-2-oxobutanoate: step 2/4.</text>
</comment>
<comment type="subunit">
    <text evidence="1">Heterodimer of LeuC and LeuD.</text>
</comment>
<comment type="similarity">
    <text evidence="1">Belongs to the aconitase/IPM isomerase family. LeuC type 1 subfamily.</text>
</comment>
<sequence length="470" mass="50588">MSAAKPTTLYDKIWNDHLVHEAEDGTCLLYIDRHLVHEVTSPQAFEGLRTAGRKVHSPEKTLAVVDHNVPTTDRSKPNPDPESAEQIAALAENARDFGVTYYNEHDKRQGVVHVIGPEQGFTLPGTTIVCGDSHTSTHGAFGALAHGIGTSEVEHVLATQTLIQKKAKNMRVTVDGDLPDGVTAKDIILAIIGEIGTAGGTGYVLEYAGDAIRALSMEGRMTVCNMSIEGGARAGLIAPDEKAYAYLKGRPMAPTGANWDAAMRYWDTLRSDEGAHFDHELRLDAAALPPIVTWGTSPEDVISITGRVPNPADIADEAKRLSKERALAYMGLTPGTRITDIKIDRMFIGSCTNGRIEDLRAAAKVAEGKTVNGNVSAMIVPGSGLVKEQAEAEGLDKIFVKAGFEWREPGCSMCLAMNPDKLAPEERCASTSNRNFEGRQGFKGRTHLVSPAMAAAAAIAGHFVDIREWR</sequence>
<feature type="chain" id="PRO_0000319833" description="3-isopropylmalate dehydratase large subunit">
    <location>
        <begin position="1"/>
        <end position="470"/>
    </location>
</feature>
<feature type="binding site" evidence="1">
    <location>
        <position position="351"/>
    </location>
    <ligand>
        <name>[4Fe-4S] cluster</name>
        <dbReference type="ChEBI" id="CHEBI:49883"/>
    </ligand>
</feature>
<feature type="binding site" evidence="1">
    <location>
        <position position="411"/>
    </location>
    <ligand>
        <name>[4Fe-4S] cluster</name>
        <dbReference type="ChEBI" id="CHEBI:49883"/>
    </ligand>
</feature>
<feature type="binding site" evidence="1">
    <location>
        <position position="414"/>
    </location>
    <ligand>
        <name>[4Fe-4S] cluster</name>
        <dbReference type="ChEBI" id="CHEBI:49883"/>
    </ligand>
</feature>
<protein>
    <recommendedName>
        <fullName evidence="1">3-isopropylmalate dehydratase large subunit</fullName>
        <ecNumber evidence="1">4.2.1.33</ecNumber>
    </recommendedName>
    <alternativeName>
        <fullName evidence="1">Alpha-IPM isomerase</fullName>
        <shortName evidence="1">IPMI</shortName>
    </alternativeName>
    <alternativeName>
        <fullName evidence="1">Isopropylmalate isomerase</fullName>
    </alternativeName>
</protein>
<accession>Q13DU7</accession>
<proteinExistence type="inferred from homology"/>
<organism>
    <name type="scientific">Rhodopseudomonas palustris (strain BisB5)</name>
    <dbReference type="NCBI Taxonomy" id="316057"/>
    <lineage>
        <taxon>Bacteria</taxon>
        <taxon>Pseudomonadati</taxon>
        <taxon>Pseudomonadota</taxon>
        <taxon>Alphaproteobacteria</taxon>
        <taxon>Hyphomicrobiales</taxon>
        <taxon>Nitrobacteraceae</taxon>
        <taxon>Rhodopseudomonas</taxon>
    </lineage>
</organism>